<reference key="1">
    <citation type="journal article" date="1988" name="J. Bacteriol.">
        <title>Genes encoding the alpha, gamma, delta, and four F0 subunits of ATP synthase constitute an operon in the cyanobacterium Anabaena sp. strain PCC 7120.</title>
        <authorList>
            <person name="McCarn D.F."/>
            <person name="Whitaker R.A."/>
            <person name="Alam J."/>
            <person name="Vrba J.M."/>
            <person name="Curtis S.E."/>
        </authorList>
    </citation>
    <scope>NUCLEOTIDE SEQUENCE [GENOMIC DNA]</scope>
</reference>
<reference key="2">
    <citation type="journal article" date="2001" name="DNA Res.">
        <title>Complete genomic sequence of the filamentous nitrogen-fixing cyanobacterium Anabaena sp. strain PCC 7120.</title>
        <authorList>
            <person name="Kaneko T."/>
            <person name="Nakamura Y."/>
            <person name="Wolk C.P."/>
            <person name="Kuritz T."/>
            <person name="Sasamoto S."/>
            <person name="Watanabe A."/>
            <person name="Iriguchi M."/>
            <person name="Ishikawa A."/>
            <person name="Kawashima K."/>
            <person name="Kimura T."/>
            <person name="Kishida Y."/>
            <person name="Kohara M."/>
            <person name="Matsumoto M."/>
            <person name="Matsuno A."/>
            <person name="Muraki A."/>
            <person name="Nakazaki N."/>
            <person name="Shimpo S."/>
            <person name="Sugimoto M."/>
            <person name="Takazawa M."/>
            <person name="Yamada M."/>
            <person name="Yasuda M."/>
            <person name="Tabata S."/>
        </authorList>
    </citation>
    <scope>NUCLEOTIDE SEQUENCE [LARGE SCALE GENOMIC DNA]</scope>
    <source>
        <strain>PCC 7120 / SAG 25.82 / UTEX 2576</strain>
    </source>
</reference>
<sequence>MDPLVSAASVLAAALAVGLAAIGPGIGQGNAAGQAVEGIARQPEAEGKIRGTLLLSLAFMEALTIYGLVVALVLLFANPFA</sequence>
<dbReference type="EMBL" id="AF242564">
    <property type="protein sequence ID" value="AAA21987.1"/>
    <property type="molecule type" value="Genomic_DNA"/>
</dbReference>
<dbReference type="EMBL" id="BA000019">
    <property type="protein sequence ID" value="BAB77533.1"/>
    <property type="molecule type" value="Genomic_DNA"/>
</dbReference>
<dbReference type="PIR" id="AI1807">
    <property type="entry name" value="AI1807"/>
</dbReference>
<dbReference type="RefSeq" id="WP_010994186.1">
    <property type="nucleotide sequence ID" value="NZ_RSCN01000005.1"/>
</dbReference>
<dbReference type="SMR" id="P12409"/>
<dbReference type="STRING" id="103690.gene:10492013"/>
<dbReference type="GeneID" id="58725372"/>
<dbReference type="KEGG" id="ana:asl0009"/>
<dbReference type="eggNOG" id="COG0636">
    <property type="taxonomic scope" value="Bacteria"/>
</dbReference>
<dbReference type="OrthoDB" id="9810379at2"/>
<dbReference type="Proteomes" id="UP000002483">
    <property type="component" value="Chromosome"/>
</dbReference>
<dbReference type="GO" id="GO:0031676">
    <property type="term" value="C:plasma membrane-derived thylakoid membrane"/>
    <property type="evidence" value="ECO:0007669"/>
    <property type="project" value="UniProtKB-SubCell"/>
</dbReference>
<dbReference type="GO" id="GO:0045259">
    <property type="term" value="C:proton-transporting ATP synthase complex"/>
    <property type="evidence" value="ECO:0007669"/>
    <property type="project" value="UniProtKB-KW"/>
</dbReference>
<dbReference type="GO" id="GO:0033177">
    <property type="term" value="C:proton-transporting two-sector ATPase complex, proton-transporting domain"/>
    <property type="evidence" value="ECO:0007669"/>
    <property type="project" value="InterPro"/>
</dbReference>
<dbReference type="GO" id="GO:0008289">
    <property type="term" value="F:lipid binding"/>
    <property type="evidence" value="ECO:0007669"/>
    <property type="project" value="UniProtKB-KW"/>
</dbReference>
<dbReference type="GO" id="GO:0046933">
    <property type="term" value="F:proton-transporting ATP synthase activity, rotational mechanism"/>
    <property type="evidence" value="ECO:0007669"/>
    <property type="project" value="UniProtKB-UniRule"/>
</dbReference>
<dbReference type="CDD" id="cd18183">
    <property type="entry name" value="ATP-synt_Fo_c_ATPH"/>
    <property type="match status" value="1"/>
</dbReference>
<dbReference type="FunFam" id="1.20.20.10:FF:000001">
    <property type="entry name" value="ATP synthase subunit c, chloroplastic"/>
    <property type="match status" value="1"/>
</dbReference>
<dbReference type="Gene3D" id="1.20.20.10">
    <property type="entry name" value="F1F0 ATP synthase subunit C"/>
    <property type="match status" value="1"/>
</dbReference>
<dbReference type="HAMAP" id="MF_01396">
    <property type="entry name" value="ATP_synth_c_bact"/>
    <property type="match status" value="1"/>
</dbReference>
<dbReference type="InterPro" id="IPR005953">
    <property type="entry name" value="ATP_synth_csu_bac/chlpt"/>
</dbReference>
<dbReference type="InterPro" id="IPR000454">
    <property type="entry name" value="ATP_synth_F0_csu"/>
</dbReference>
<dbReference type="InterPro" id="IPR020537">
    <property type="entry name" value="ATP_synth_F0_csu_DDCD_BS"/>
</dbReference>
<dbReference type="InterPro" id="IPR038662">
    <property type="entry name" value="ATP_synth_F0_csu_sf"/>
</dbReference>
<dbReference type="InterPro" id="IPR002379">
    <property type="entry name" value="ATPase_proteolipid_c-like_dom"/>
</dbReference>
<dbReference type="InterPro" id="IPR035921">
    <property type="entry name" value="F/V-ATP_Csub_sf"/>
</dbReference>
<dbReference type="NCBIfam" id="TIGR01260">
    <property type="entry name" value="ATP_synt_c"/>
    <property type="match status" value="1"/>
</dbReference>
<dbReference type="NCBIfam" id="NF005608">
    <property type="entry name" value="PRK07354.1"/>
    <property type="match status" value="1"/>
</dbReference>
<dbReference type="PANTHER" id="PTHR10031">
    <property type="entry name" value="ATP SYNTHASE LIPID-BINDING PROTEIN, MITOCHONDRIAL"/>
    <property type="match status" value="1"/>
</dbReference>
<dbReference type="PANTHER" id="PTHR10031:SF0">
    <property type="entry name" value="ATPASE PROTEIN 9"/>
    <property type="match status" value="1"/>
</dbReference>
<dbReference type="Pfam" id="PF00137">
    <property type="entry name" value="ATP-synt_C"/>
    <property type="match status" value="1"/>
</dbReference>
<dbReference type="PRINTS" id="PR00124">
    <property type="entry name" value="ATPASEC"/>
</dbReference>
<dbReference type="SUPFAM" id="SSF81333">
    <property type="entry name" value="F1F0 ATP synthase subunit C"/>
    <property type="match status" value="1"/>
</dbReference>
<dbReference type="PROSITE" id="PS00605">
    <property type="entry name" value="ATPASE_C"/>
    <property type="match status" value="1"/>
</dbReference>
<keyword id="KW-0066">ATP synthesis</keyword>
<keyword id="KW-0138">CF(0)</keyword>
<keyword id="KW-0375">Hydrogen ion transport</keyword>
<keyword id="KW-0406">Ion transport</keyword>
<keyword id="KW-0446">Lipid-binding</keyword>
<keyword id="KW-0472">Membrane</keyword>
<keyword id="KW-1185">Reference proteome</keyword>
<keyword id="KW-0793">Thylakoid</keyword>
<keyword id="KW-0812">Transmembrane</keyword>
<keyword id="KW-1133">Transmembrane helix</keyword>
<keyword id="KW-0813">Transport</keyword>
<feature type="chain" id="PRO_0000112131" description="ATP synthase subunit c">
    <location>
        <begin position="1"/>
        <end position="81"/>
    </location>
</feature>
<feature type="transmembrane region" description="Helical" evidence="1">
    <location>
        <begin position="7"/>
        <end position="27"/>
    </location>
</feature>
<feature type="transmembrane region" description="Helical" evidence="1">
    <location>
        <begin position="57"/>
        <end position="77"/>
    </location>
</feature>
<feature type="site" description="Reversibly protonated during proton transport" evidence="1">
    <location>
        <position position="61"/>
    </location>
</feature>
<accession>P12409</accession>
<evidence type="ECO:0000255" key="1">
    <source>
        <dbReference type="HAMAP-Rule" id="MF_01396"/>
    </source>
</evidence>
<proteinExistence type="inferred from homology"/>
<gene>
    <name evidence="1" type="primary">atpE</name>
    <name evidence="1" type="synonym">atpH</name>
    <name type="ordered locus">asl0009</name>
</gene>
<comment type="function">
    <text evidence="1">F(1)F(0) ATP synthase produces ATP from ADP in the presence of a proton or sodium gradient. F-type ATPases consist of two structural domains, F(1) containing the extramembraneous catalytic core and F(0) containing the membrane proton channel, linked together by a central stalk and a peripheral stalk. During catalysis, ATP synthesis in the catalytic domain of F(1) is coupled via a rotary mechanism of the central stalk subunits to proton translocation.</text>
</comment>
<comment type="function">
    <text evidence="1">Key component of the F(0) channel; it plays a direct role in translocation across the membrane. A homomeric c-ring of between 10-14 subunits forms the central stalk rotor element with the F(1) delta and epsilon subunits.</text>
</comment>
<comment type="subunit">
    <text evidence="1">F-type ATPases have 2 components, F(1) - the catalytic core - and F(0) - the membrane proton channel. F(1) has five subunits: alpha(3), beta(3), gamma(1), delta(1), epsilon(1). F(0) has four main subunits: a(1), b(1), b'(1) and c(10-14). The alpha and beta chains form an alternating ring which encloses part of the gamma chain. F(1) is attached to F(0) by a central stalk formed by the gamma and epsilon chains, while a peripheral stalk is formed by the delta, b and b' chains.</text>
</comment>
<comment type="subcellular location">
    <subcellularLocation>
        <location evidence="1">Cellular thylakoid membrane</location>
        <topology evidence="1">Multi-pass membrane protein</topology>
    </subcellularLocation>
</comment>
<comment type="similarity">
    <text evidence="1">Belongs to the ATPase C chain family.</text>
</comment>
<name>ATPL_NOSS1</name>
<protein>
    <recommendedName>
        <fullName evidence="1">ATP synthase subunit c</fullName>
    </recommendedName>
    <alternativeName>
        <fullName evidence="1">ATP synthase F(0) sector subunit c</fullName>
    </alternativeName>
    <alternativeName>
        <fullName evidence="1">F-type ATPase subunit c</fullName>
        <shortName evidence="1">F-ATPase subunit c</shortName>
    </alternativeName>
    <alternativeName>
        <fullName evidence="1">Lipid-binding protein</fullName>
    </alternativeName>
</protein>
<organism>
    <name type="scientific">Nostoc sp. (strain PCC 7120 / SAG 25.82 / UTEX 2576)</name>
    <dbReference type="NCBI Taxonomy" id="103690"/>
    <lineage>
        <taxon>Bacteria</taxon>
        <taxon>Bacillati</taxon>
        <taxon>Cyanobacteriota</taxon>
        <taxon>Cyanophyceae</taxon>
        <taxon>Nostocales</taxon>
        <taxon>Nostocaceae</taxon>
        <taxon>Nostoc</taxon>
    </lineage>
</organism>